<proteinExistence type="inferred from homology"/>
<evidence type="ECO:0000250" key="1"/>
<evidence type="ECO:0000250" key="2">
    <source>
        <dbReference type="UniProtKB" id="Q7WG29"/>
    </source>
</evidence>
<evidence type="ECO:0000305" key="3"/>
<keyword id="KW-0119">Carbohydrate metabolism</keyword>
<keyword id="KW-0963">Cytoplasm</keyword>
<keyword id="KW-0378">Hydrolase</keyword>
<keyword id="KW-0460">Magnesium</keyword>
<keyword id="KW-0479">Metal-binding</keyword>
<keyword id="KW-1185">Reference proteome</keyword>
<keyword id="KW-0862">Zinc</keyword>
<gene>
    <name type="primary">gmhB</name>
    <name type="ordered locus">MT0122.1</name>
</gene>
<dbReference type="EC" id="3.1.3.83"/>
<dbReference type="EMBL" id="AE000516">
    <property type="protein sequence ID" value="AAK44345.1"/>
    <property type="status" value="ALT_INIT"/>
    <property type="molecule type" value="Genomic_DNA"/>
</dbReference>
<dbReference type="PIR" id="E70840">
    <property type="entry name" value="E70840"/>
</dbReference>
<dbReference type="RefSeq" id="WP_003400840.1">
    <property type="nucleotide sequence ID" value="NZ_KK341227.1"/>
</dbReference>
<dbReference type="SMR" id="P9WMV2"/>
<dbReference type="GeneID" id="45424079"/>
<dbReference type="KEGG" id="mtc:MT0122"/>
<dbReference type="PATRIC" id="fig|83331.31.peg.129"/>
<dbReference type="HOGENOM" id="CLU_066606_0_0_11"/>
<dbReference type="UniPathway" id="UPA00543">
    <property type="reaction ID" value="UER00607"/>
</dbReference>
<dbReference type="Proteomes" id="UP000001020">
    <property type="component" value="Chromosome"/>
</dbReference>
<dbReference type="GO" id="GO:0005737">
    <property type="term" value="C:cytoplasm"/>
    <property type="evidence" value="ECO:0007669"/>
    <property type="project" value="UniProtKB-SubCell"/>
</dbReference>
<dbReference type="GO" id="GO:0034200">
    <property type="term" value="F:D-glycero-beta-D-manno-heptose 1,7-bisphosphate 7-phosphatase activity"/>
    <property type="evidence" value="ECO:0000250"/>
    <property type="project" value="UniProtKB"/>
</dbReference>
<dbReference type="GO" id="GO:0000287">
    <property type="term" value="F:magnesium ion binding"/>
    <property type="evidence" value="ECO:0000250"/>
    <property type="project" value="UniProtKB"/>
</dbReference>
<dbReference type="GO" id="GO:0008270">
    <property type="term" value="F:zinc ion binding"/>
    <property type="evidence" value="ECO:0000250"/>
    <property type="project" value="UniProtKB"/>
</dbReference>
<dbReference type="GO" id="GO:0005975">
    <property type="term" value="P:carbohydrate metabolic process"/>
    <property type="evidence" value="ECO:0007669"/>
    <property type="project" value="InterPro"/>
</dbReference>
<dbReference type="CDD" id="cd07503">
    <property type="entry name" value="HAD_HisB-N"/>
    <property type="match status" value="1"/>
</dbReference>
<dbReference type="Gene3D" id="3.40.50.1000">
    <property type="entry name" value="HAD superfamily/HAD-like"/>
    <property type="match status" value="1"/>
</dbReference>
<dbReference type="InterPro" id="IPR036412">
    <property type="entry name" value="HAD-like_sf"/>
</dbReference>
<dbReference type="InterPro" id="IPR006549">
    <property type="entry name" value="HAD-SF_hydro_IIIA"/>
</dbReference>
<dbReference type="InterPro" id="IPR023214">
    <property type="entry name" value="HAD_sf"/>
</dbReference>
<dbReference type="InterPro" id="IPR004446">
    <property type="entry name" value="Heptose_bisP_phosphatase"/>
</dbReference>
<dbReference type="InterPro" id="IPR006543">
    <property type="entry name" value="Histidinol-phos"/>
</dbReference>
<dbReference type="NCBIfam" id="TIGR01662">
    <property type="entry name" value="HAD-SF-IIIA"/>
    <property type="match status" value="1"/>
</dbReference>
<dbReference type="NCBIfam" id="TIGR01656">
    <property type="entry name" value="Histidinol-ppas"/>
    <property type="match status" value="1"/>
</dbReference>
<dbReference type="PANTHER" id="PTHR42891">
    <property type="entry name" value="D-GLYCERO-BETA-D-MANNO-HEPTOSE-1,7-BISPHOSPHATE 7-PHOSPHATASE"/>
    <property type="match status" value="1"/>
</dbReference>
<dbReference type="PANTHER" id="PTHR42891:SF1">
    <property type="entry name" value="D-GLYCERO-BETA-D-MANNO-HEPTOSE-1,7-BISPHOSPHATE 7-PHOSPHATASE"/>
    <property type="match status" value="1"/>
</dbReference>
<dbReference type="SUPFAM" id="SSF56784">
    <property type="entry name" value="HAD-like"/>
    <property type="match status" value="1"/>
</dbReference>
<reference key="1">
    <citation type="journal article" date="2002" name="J. Bacteriol.">
        <title>Whole-genome comparison of Mycobacterium tuberculosis clinical and laboratory strains.</title>
        <authorList>
            <person name="Fleischmann R.D."/>
            <person name="Alland D."/>
            <person name="Eisen J.A."/>
            <person name="Carpenter L."/>
            <person name="White O."/>
            <person name="Peterson J.D."/>
            <person name="DeBoy R.T."/>
            <person name="Dodson R.J."/>
            <person name="Gwinn M.L."/>
            <person name="Haft D.H."/>
            <person name="Hickey E.K."/>
            <person name="Kolonay J.F."/>
            <person name="Nelson W.C."/>
            <person name="Umayam L.A."/>
            <person name="Ermolaeva M.D."/>
            <person name="Salzberg S.L."/>
            <person name="Delcher A."/>
            <person name="Utterback T.R."/>
            <person name="Weidman J.F."/>
            <person name="Khouri H.M."/>
            <person name="Gill J."/>
            <person name="Mikula A."/>
            <person name="Bishai W."/>
            <person name="Jacobs W.R. Jr."/>
            <person name="Venter J.C."/>
            <person name="Fraser C.M."/>
        </authorList>
    </citation>
    <scope>NUCLEOTIDE SEQUENCE [LARGE SCALE GENOMIC DNA]</scope>
    <source>
        <strain>CDC 1551 / Oshkosh</strain>
    </source>
</reference>
<feature type="chain" id="PRO_0000427237" description="D-glycero-alpha-D-manno-heptose-1,7-bisphosphate 7-phosphatase">
    <location>
        <begin position="1"/>
        <end position="190"/>
    </location>
</feature>
<feature type="active site" description="Nucleophile" evidence="1">
    <location>
        <position position="15"/>
    </location>
</feature>
<feature type="active site" description="Proton donor" evidence="1">
    <location>
        <position position="17"/>
    </location>
</feature>
<feature type="binding site" evidence="1">
    <location>
        <begin position="15"/>
        <end position="17"/>
    </location>
    <ligand>
        <name>substrate</name>
    </ligand>
</feature>
<feature type="binding site" evidence="2">
    <location>
        <position position="15"/>
    </location>
    <ligand>
        <name>Mg(2+)</name>
        <dbReference type="ChEBI" id="CHEBI:18420"/>
    </ligand>
</feature>
<feature type="binding site" evidence="2">
    <location>
        <position position="17"/>
    </location>
    <ligand>
        <name>Mg(2+)</name>
        <dbReference type="ChEBI" id="CHEBI:18420"/>
    </ligand>
</feature>
<feature type="binding site" evidence="1">
    <location>
        <begin position="23"/>
        <end position="28"/>
    </location>
    <ligand>
        <name>substrate</name>
    </ligand>
</feature>
<feature type="binding site" evidence="1">
    <location>
        <begin position="59"/>
        <end position="62"/>
    </location>
    <ligand>
        <name>substrate</name>
    </ligand>
</feature>
<feature type="binding site" evidence="2">
    <location>
        <position position="98"/>
    </location>
    <ligand>
        <name>Zn(2+)</name>
        <dbReference type="ChEBI" id="CHEBI:29105"/>
    </ligand>
</feature>
<feature type="binding site" evidence="2">
    <location>
        <position position="100"/>
    </location>
    <ligand>
        <name>Zn(2+)</name>
        <dbReference type="ChEBI" id="CHEBI:29105"/>
    </ligand>
</feature>
<feature type="binding site" evidence="2">
    <location>
        <position position="106"/>
    </location>
    <ligand>
        <name>Zn(2+)</name>
        <dbReference type="ChEBI" id="CHEBI:29105"/>
    </ligand>
</feature>
<feature type="binding site" evidence="2">
    <location>
        <position position="108"/>
    </location>
    <ligand>
        <name>Zn(2+)</name>
        <dbReference type="ChEBI" id="CHEBI:29105"/>
    </ligand>
</feature>
<feature type="binding site" evidence="1">
    <location>
        <begin position="109"/>
        <end position="110"/>
    </location>
    <ligand>
        <name>substrate</name>
    </ligand>
</feature>
<feature type="binding site" evidence="2">
    <location>
        <position position="136"/>
    </location>
    <ligand>
        <name>Mg(2+)</name>
        <dbReference type="ChEBI" id="CHEBI:18420"/>
    </ligand>
</feature>
<feature type="site" description="Stabilizes the phosphoryl group" evidence="1">
    <location>
        <position position="59"/>
    </location>
</feature>
<feature type="site" description="Contributes to substrate recognition" evidence="1">
    <location>
        <position position="109"/>
    </location>
</feature>
<feature type="site" description="Stabilizes the phosphoryl group" evidence="1">
    <location>
        <position position="110"/>
    </location>
</feature>
<organism>
    <name type="scientific">Mycobacterium tuberculosis (strain CDC 1551 / Oshkosh)</name>
    <dbReference type="NCBI Taxonomy" id="83331"/>
    <lineage>
        <taxon>Bacteria</taxon>
        <taxon>Bacillati</taxon>
        <taxon>Actinomycetota</taxon>
        <taxon>Actinomycetes</taxon>
        <taxon>Mycobacteriales</taxon>
        <taxon>Mycobacteriaceae</taxon>
        <taxon>Mycobacterium</taxon>
        <taxon>Mycobacterium tuberculosis complex</taxon>
    </lineage>
</organism>
<comment type="function">
    <text evidence="1">Converts the D-glycero-alpha-D-manno-heptose 1,7-bisphosphate intermediate into D-glycero-alpha-D-manno-heptose 1-phosphate by removing the phosphate group at the C-7 position.</text>
</comment>
<comment type="catalytic activity">
    <reaction>
        <text>D-glycero-alpha-D-manno-heptose 1,7-bisphosphate + H2O = D-glycero-alpha-D-manno-heptose 1-phosphate + phosphate</text>
        <dbReference type="Rhea" id="RHEA:28522"/>
        <dbReference type="ChEBI" id="CHEBI:15377"/>
        <dbReference type="ChEBI" id="CHEBI:43474"/>
        <dbReference type="ChEBI" id="CHEBI:60207"/>
        <dbReference type="ChEBI" id="CHEBI:61574"/>
        <dbReference type="EC" id="3.1.3.83"/>
    </reaction>
</comment>
<comment type="cofactor">
    <cofactor evidence="1">
        <name>Mg(2+)</name>
        <dbReference type="ChEBI" id="CHEBI:18420"/>
    </cofactor>
</comment>
<comment type="cofactor">
    <cofactor evidence="1">
        <name>Zn(2+)</name>
        <dbReference type="ChEBI" id="CHEBI:29105"/>
    </cofactor>
</comment>
<comment type="pathway">
    <text>Nucleotide-sugar biosynthesis; GDP-D-glycero-alpha-D-manno-heptose biosynthesis; GDP-D-glycero-alpha-D-manno-heptose from D-glycero-alpha-D-manno-heptose 7-phosphate: step 2/3.</text>
</comment>
<comment type="subunit">
    <text evidence="1">Monomer.</text>
</comment>
<comment type="subcellular location">
    <subcellularLocation>
        <location evidence="1">Cytoplasm</location>
    </subcellularLocation>
</comment>
<comment type="similarity">
    <text evidence="3">Belongs to the GmhB family.</text>
</comment>
<comment type="sequence caution" evidence="3">
    <conflict type="erroneous initiation">
        <sequence resource="EMBL-CDS" id="AAK44345"/>
    </conflict>
    <text>Extended N-terminus.</text>
</comment>
<protein>
    <recommendedName>
        <fullName>D-glycero-alpha-D-manno-heptose-1,7-bisphosphate 7-phosphatase</fullName>
        <ecNumber>3.1.3.83</ecNumber>
    </recommendedName>
    <alternativeName>
        <fullName>D,D-heptose 1,7-bisphosphate phosphatase</fullName>
        <shortName>HBP phosphatase</shortName>
    </alternativeName>
</protein>
<name>GMHBA_MYCTO</name>
<sequence>MVAERAGHQWCLFLDRDGVINRQVVGDYVRNWRQFEWLPGAARALKKLRAWAPYIVVVTNQQGVGAGLMSAVDVMVIHRHLQMQLASDGVLIDGFQVCPHHRSQRCGCRKPRPGLVLDWLGRHPDSEPLLSIVVGDSLSDLELAHNVAAAAGACASVQIGGASSGGVADASFDSLWEFAVAVGHARGERG</sequence>
<accession>P9WMV2</accession>
<accession>L0T2I2</accession>
<accession>O53636</accession>